<name>WNK8_ARATH</name>
<comment type="function">
    <text evidence="6 7 8 9">Regulates flowering time by modulating the photoperiod pathway. Phosphorylates the vacuolar ATPase subunit C (VATC) and RGS1 (PubMed:16427632, PubMed:18761494). Regulates EDM2 that, in turn, modulates development processes (PubMed:20149132, PubMed:20840782).</text>
</comment>
<comment type="catalytic activity">
    <reaction>
        <text>L-seryl-[protein] + ATP = O-phospho-L-seryl-[protein] + ADP + H(+)</text>
        <dbReference type="Rhea" id="RHEA:17989"/>
        <dbReference type="Rhea" id="RHEA-COMP:9863"/>
        <dbReference type="Rhea" id="RHEA-COMP:11604"/>
        <dbReference type="ChEBI" id="CHEBI:15378"/>
        <dbReference type="ChEBI" id="CHEBI:29999"/>
        <dbReference type="ChEBI" id="CHEBI:30616"/>
        <dbReference type="ChEBI" id="CHEBI:83421"/>
        <dbReference type="ChEBI" id="CHEBI:456216"/>
        <dbReference type="EC" id="2.7.11.1"/>
    </reaction>
</comment>
<comment type="catalytic activity">
    <reaction>
        <text>L-threonyl-[protein] + ATP = O-phospho-L-threonyl-[protein] + ADP + H(+)</text>
        <dbReference type="Rhea" id="RHEA:46608"/>
        <dbReference type="Rhea" id="RHEA-COMP:11060"/>
        <dbReference type="Rhea" id="RHEA-COMP:11605"/>
        <dbReference type="ChEBI" id="CHEBI:15378"/>
        <dbReference type="ChEBI" id="CHEBI:30013"/>
        <dbReference type="ChEBI" id="CHEBI:30616"/>
        <dbReference type="ChEBI" id="CHEBI:61977"/>
        <dbReference type="ChEBI" id="CHEBI:456216"/>
        <dbReference type="EC" id="2.7.11.1"/>
    </reaction>
</comment>
<comment type="subunit">
    <text evidence="8 10 11">Interacts with RGS1 and GB1, but not with GPA1. The association with RGS1 at the plasma membrane is triggered by induction of glucose (PubMed:21952135, PubMed:22940907). Binds to EDM2 in nucleus (PubMed:20149132).</text>
</comment>
<comment type="interaction">
    <interactant intactId="EBI-4441446">
        <id>Q944Q0</id>
    </interactant>
    <interactant intactId="EBI-1794418">
        <id>Q9SDS7</id>
        <label>VHA-C</label>
    </interactant>
    <organismsDiffer>false</organismsDiffer>
    <experiments>4</experiments>
</comment>
<comment type="interaction">
    <interactant intactId="EBI-4441446">
        <id>Q944Q0</id>
    </interactant>
    <interactant intactId="EBI-4441446">
        <id>Q944Q0</id>
        <label>WNK8</label>
    </interactant>
    <organismsDiffer>false</organismsDiffer>
    <experiments>2</experiments>
</comment>
<comment type="subcellular location">
    <subcellularLocation>
        <location evidence="8">Nucleus</location>
    </subcellularLocation>
</comment>
<comment type="PTM">
    <text evidence="6 8">Autophosphorylated.</text>
</comment>
<comment type="disruption phenotype">
    <text evidence="7">Plants display early flowering and altered expression of genes involved in the photoperiod flowering pathway, such as ELF4, TOC1, CO and FT.</text>
</comment>
<comment type="similarity">
    <text evidence="4">Belongs to the protein kinase superfamily. Ser/Thr protein kinase family. WNK subfamily.</text>
</comment>
<comment type="caution">
    <text evidence="1">Was named WNK/'with no lysine(K)' because key residues for catalysis, including the lysine involved in ATP binding, are either not conserved or differ compared to the residues described in other kinase family proteins.</text>
</comment>
<comment type="sequence caution" evidence="12">
    <conflict type="erroneous gene model prediction">
        <sequence resource="EMBL-CDS" id="BAB08432"/>
    </conflict>
</comment>
<feature type="chain" id="PRO_0000351666" description="Serine/threonine-protein kinase WNK8">
    <location>
        <begin position="1"/>
        <end position="563"/>
    </location>
</feature>
<feature type="domain" description="Protein kinase" evidence="4">
    <location>
        <begin position="29"/>
        <end position="286"/>
    </location>
</feature>
<feature type="region of interest" description="Disordered" evidence="5">
    <location>
        <begin position="426"/>
        <end position="459"/>
    </location>
</feature>
<feature type="compositionally biased region" description="Polar residues" evidence="5">
    <location>
        <begin position="426"/>
        <end position="436"/>
    </location>
</feature>
<feature type="active site" description="Proton acceptor" evidence="2">
    <location>
        <position position="176"/>
    </location>
</feature>
<feature type="binding site" evidence="1">
    <location>
        <begin position="109"/>
        <end position="112"/>
    </location>
    <ligand>
        <name>ATP</name>
        <dbReference type="ChEBI" id="CHEBI:30616"/>
    </ligand>
</feature>
<feature type="binding site" evidence="1">
    <location>
        <position position="159"/>
    </location>
    <ligand>
        <name>ATP</name>
        <dbReference type="ChEBI" id="CHEBI:30616"/>
    </ligand>
</feature>
<feature type="modified residue" description="Phosphoserine" evidence="3">
    <location>
        <position position="509"/>
    </location>
</feature>
<feature type="mutagenesis site" description="Loss of autophosphorylation." evidence="6">
    <original>K</original>
    <variation>M</variation>
    <location>
        <position position="41"/>
    </location>
</feature>
<feature type="mutagenesis site" description="Loss of autophosphorylation." evidence="6">
    <original>D</original>
    <variation>A</variation>
    <location>
        <position position="157"/>
    </location>
</feature>
<accession>Q944Q0</accession>
<accession>Q8S8Y7</accession>
<accession>Q9FHY4</accession>
<dbReference type="EC" id="2.7.11.1"/>
<dbReference type="EMBL" id="AB017067">
    <property type="protein sequence ID" value="BAB08432.1"/>
    <property type="status" value="ALT_SEQ"/>
    <property type="molecule type" value="Genomic_DNA"/>
</dbReference>
<dbReference type="EMBL" id="CP002688">
    <property type="protein sequence ID" value="AED94750.1"/>
    <property type="molecule type" value="Genomic_DNA"/>
</dbReference>
<dbReference type="EMBL" id="AF424629">
    <property type="protein sequence ID" value="AAL11622.1"/>
    <property type="molecule type" value="mRNA"/>
</dbReference>
<dbReference type="EMBL" id="AY113042">
    <property type="protein sequence ID" value="AAM47350.1"/>
    <property type="molecule type" value="mRNA"/>
</dbReference>
<dbReference type="EMBL" id="AB084271">
    <property type="protein sequence ID" value="BAB91130.1"/>
    <property type="molecule type" value="mRNA"/>
</dbReference>
<dbReference type="RefSeq" id="NP_568599.1">
    <property type="nucleotide sequence ID" value="NM_123564.3"/>
</dbReference>
<dbReference type="SMR" id="Q944Q0"/>
<dbReference type="BioGRID" id="19454">
    <property type="interactions" value="7"/>
</dbReference>
<dbReference type="FunCoup" id="Q944Q0">
    <property type="interactions" value="2286"/>
</dbReference>
<dbReference type="IntAct" id="Q944Q0">
    <property type="interactions" value="3"/>
</dbReference>
<dbReference type="MINT" id="Q944Q0"/>
<dbReference type="STRING" id="3702.Q944Q0"/>
<dbReference type="iPTMnet" id="Q944Q0"/>
<dbReference type="PaxDb" id="3702-AT5G41990.1"/>
<dbReference type="ProteomicsDB" id="242452"/>
<dbReference type="EnsemblPlants" id="AT5G41990.1">
    <property type="protein sequence ID" value="AT5G41990.1"/>
    <property type="gene ID" value="AT5G41990"/>
</dbReference>
<dbReference type="GeneID" id="834204"/>
<dbReference type="Gramene" id="AT5G41990.1">
    <property type="protein sequence ID" value="AT5G41990.1"/>
    <property type="gene ID" value="AT5G41990"/>
</dbReference>
<dbReference type="KEGG" id="ath:AT5G41990"/>
<dbReference type="Araport" id="AT5G41990"/>
<dbReference type="TAIR" id="AT5G41990">
    <property type="gene designation" value="WNK8"/>
</dbReference>
<dbReference type="eggNOG" id="KOG0584">
    <property type="taxonomic scope" value="Eukaryota"/>
</dbReference>
<dbReference type="HOGENOM" id="CLU_000288_142_0_1"/>
<dbReference type="InParanoid" id="Q944Q0"/>
<dbReference type="OMA" id="DVDHNEN"/>
<dbReference type="PhylomeDB" id="Q944Q0"/>
<dbReference type="PRO" id="PR:Q944Q0"/>
<dbReference type="Proteomes" id="UP000006548">
    <property type="component" value="Chromosome 5"/>
</dbReference>
<dbReference type="ExpressionAtlas" id="Q944Q0">
    <property type="expression patterns" value="baseline and differential"/>
</dbReference>
<dbReference type="GO" id="GO:0005634">
    <property type="term" value="C:nucleus"/>
    <property type="evidence" value="ECO:0000314"/>
    <property type="project" value="TAIR"/>
</dbReference>
<dbReference type="GO" id="GO:0005524">
    <property type="term" value="F:ATP binding"/>
    <property type="evidence" value="ECO:0007669"/>
    <property type="project" value="UniProtKB-KW"/>
</dbReference>
<dbReference type="GO" id="GO:0042802">
    <property type="term" value="F:identical protein binding"/>
    <property type="evidence" value="ECO:0000353"/>
    <property type="project" value="IntAct"/>
</dbReference>
<dbReference type="GO" id="GO:0004672">
    <property type="term" value="F:protein kinase activity"/>
    <property type="evidence" value="ECO:0000314"/>
    <property type="project" value="TAIR"/>
</dbReference>
<dbReference type="GO" id="GO:0106310">
    <property type="term" value="F:protein serine kinase activity"/>
    <property type="evidence" value="ECO:0007669"/>
    <property type="project" value="RHEA"/>
</dbReference>
<dbReference type="GO" id="GO:0004674">
    <property type="term" value="F:protein serine/threonine kinase activity"/>
    <property type="evidence" value="ECO:0007669"/>
    <property type="project" value="UniProtKB-KW"/>
</dbReference>
<dbReference type="GO" id="GO:0048573">
    <property type="term" value="P:photoperiodism, flowering"/>
    <property type="evidence" value="ECO:0000315"/>
    <property type="project" value="TAIR"/>
</dbReference>
<dbReference type="GO" id="GO:0009911">
    <property type="term" value="P:positive regulation of flower development"/>
    <property type="evidence" value="ECO:0000315"/>
    <property type="project" value="TAIR"/>
</dbReference>
<dbReference type="GO" id="GO:0046777">
    <property type="term" value="P:protein autophosphorylation"/>
    <property type="evidence" value="ECO:0000314"/>
    <property type="project" value="TAIR"/>
</dbReference>
<dbReference type="GO" id="GO:0006468">
    <property type="term" value="P:protein phosphorylation"/>
    <property type="evidence" value="ECO:0000314"/>
    <property type="project" value="TAIR"/>
</dbReference>
<dbReference type="GO" id="GO:0009909">
    <property type="term" value="P:regulation of flower development"/>
    <property type="evidence" value="ECO:0000315"/>
    <property type="project" value="TAIR"/>
</dbReference>
<dbReference type="GO" id="GO:0010228">
    <property type="term" value="P:vegetative to reproductive phase transition of meristem"/>
    <property type="evidence" value="ECO:0000315"/>
    <property type="project" value="TAIR"/>
</dbReference>
<dbReference type="CDD" id="cd13983">
    <property type="entry name" value="STKc_WNK"/>
    <property type="match status" value="1"/>
</dbReference>
<dbReference type="FunFam" id="3.30.200.20:FF:000075">
    <property type="entry name" value="Probable serine/threonine-protein kinase WNK1"/>
    <property type="match status" value="1"/>
</dbReference>
<dbReference type="FunFam" id="1.10.510.10:FF:000046">
    <property type="entry name" value="probable serine/threonine-protein kinase WNK9"/>
    <property type="match status" value="1"/>
</dbReference>
<dbReference type="Gene3D" id="3.10.20.90">
    <property type="entry name" value="Phosphatidylinositol 3-kinase Catalytic Subunit, Chain A, domain 1"/>
    <property type="match status" value="1"/>
</dbReference>
<dbReference type="Gene3D" id="3.30.200.20">
    <property type="entry name" value="Phosphorylase Kinase, domain 1"/>
    <property type="match status" value="1"/>
</dbReference>
<dbReference type="Gene3D" id="1.10.510.10">
    <property type="entry name" value="Transferase(Phosphotransferase) domain 1"/>
    <property type="match status" value="1"/>
</dbReference>
<dbReference type="InterPro" id="IPR011009">
    <property type="entry name" value="Kinase-like_dom_sf"/>
</dbReference>
<dbReference type="InterPro" id="IPR000719">
    <property type="entry name" value="Prot_kinase_dom"/>
</dbReference>
<dbReference type="InterPro" id="IPR008271">
    <property type="entry name" value="Ser/Thr_kinase_AS"/>
</dbReference>
<dbReference type="InterPro" id="IPR050588">
    <property type="entry name" value="WNK_Ser-Thr_kinase"/>
</dbReference>
<dbReference type="PANTHER" id="PTHR13902">
    <property type="entry name" value="SERINE/THREONINE-PROTEIN KINASE WNK WITH NO LYSINE -RELATED"/>
    <property type="match status" value="1"/>
</dbReference>
<dbReference type="Pfam" id="PF00069">
    <property type="entry name" value="Pkinase"/>
    <property type="match status" value="1"/>
</dbReference>
<dbReference type="SMART" id="SM00220">
    <property type="entry name" value="S_TKc"/>
    <property type="match status" value="1"/>
</dbReference>
<dbReference type="SUPFAM" id="SSF56112">
    <property type="entry name" value="Protein kinase-like (PK-like)"/>
    <property type="match status" value="1"/>
</dbReference>
<dbReference type="PROSITE" id="PS50011">
    <property type="entry name" value="PROTEIN_KINASE_DOM"/>
    <property type="match status" value="1"/>
</dbReference>
<dbReference type="PROSITE" id="PS00108">
    <property type="entry name" value="PROTEIN_KINASE_ST"/>
    <property type="match status" value="1"/>
</dbReference>
<keyword id="KW-0067">ATP-binding</keyword>
<keyword id="KW-0418">Kinase</keyword>
<keyword id="KW-0547">Nucleotide-binding</keyword>
<keyword id="KW-0539">Nucleus</keyword>
<keyword id="KW-0597">Phosphoprotein</keyword>
<keyword id="KW-1185">Reference proteome</keyword>
<keyword id="KW-0723">Serine/threonine-protein kinase</keyword>
<keyword id="KW-0808">Transferase</keyword>
<reference key="1">
    <citation type="journal article" date="1999" name="DNA Res.">
        <title>Structural analysis of Arabidopsis thaliana chromosome 5. IX. Sequence features of the regions of 1,011,550 bp covered by seventeen P1 and TAC clones.</title>
        <authorList>
            <person name="Kaneko T."/>
            <person name="Katoh T."/>
            <person name="Sato S."/>
            <person name="Nakamura Y."/>
            <person name="Asamizu E."/>
            <person name="Kotani H."/>
            <person name="Miyajima N."/>
            <person name="Tabata S."/>
        </authorList>
    </citation>
    <scope>NUCLEOTIDE SEQUENCE [LARGE SCALE GENOMIC DNA]</scope>
    <source>
        <strain>cv. Columbia</strain>
    </source>
</reference>
<reference key="2">
    <citation type="journal article" date="2017" name="Plant J.">
        <title>Araport11: a complete reannotation of the Arabidopsis thaliana reference genome.</title>
        <authorList>
            <person name="Cheng C.Y."/>
            <person name="Krishnakumar V."/>
            <person name="Chan A.P."/>
            <person name="Thibaud-Nissen F."/>
            <person name="Schobel S."/>
            <person name="Town C.D."/>
        </authorList>
    </citation>
    <scope>GENOME REANNOTATION</scope>
    <source>
        <strain>cv. Columbia</strain>
    </source>
</reference>
<reference key="3">
    <citation type="journal article" date="2003" name="Science">
        <title>Empirical analysis of transcriptional activity in the Arabidopsis genome.</title>
        <authorList>
            <person name="Yamada K."/>
            <person name="Lim J."/>
            <person name="Dale J.M."/>
            <person name="Chen H."/>
            <person name="Shinn P."/>
            <person name="Palm C.J."/>
            <person name="Southwick A.M."/>
            <person name="Wu H.C."/>
            <person name="Kim C.J."/>
            <person name="Nguyen M."/>
            <person name="Pham P.K."/>
            <person name="Cheuk R.F."/>
            <person name="Karlin-Newmann G."/>
            <person name="Liu S.X."/>
            <person name="Lam B."/>
            <person name="Sakano H."/>
            <person name="Wu T."/>
            <person name="Yu G."/>
            <person name="Miranda M."/>
            <person name="Quach H.L."/>
            <person name="Tripp M."/>
            <person name="Chang C.H."/>
            <person name="Lee J.M."/>
            <person name="Toriumi M.J."/>
            <person name="Chan M.M."/>
            <person name="Tang C.C."/>
            <person name="Onodera C.S."/>
            <person name="Deng J.M."/>
            <person name="Akiyama K."/>
            <person name="Ansari Y."/>
            <person name="Arakawa T."/>
            <person name="Banh J."/>
            <person name="Banno F."/>
            <person name="Bowser L."/>
            <person name="Brooks S.Y."/>
            <person name="Carninci P."/>
            <person name="Chao Q."/>
            <person name="Choy N."/>
            <person name="Enju A."/>
            <person name="Goldsmith A.D."/>
            <person name="Gurjal M."/>
            <person name="Hansen N.F."/>
            <person name="Hayashizaki Y."/>
            <person name="Johnson-Hopson C."/>
            <person name="Hsuan V.W."/>
            <person name="Iida K."/>
            <person name="Karnes M."/>
            <person name="Khan S."/>
            <person name="Koesema E."/>
            <person name="Ishida J."/>
            <person name="Jiang P.X."/>
            <person name="Jones T."/>
            <person name="Kawai J."/>
            <person name="Kamiya A."/>
            <person name="Meyers C."/>
            <person name="Nakajima M."/>
            <person name="Narusaka M."/>
            <person name="Seki M."/>
            <person name="Sakurai T."/>
            <person name="Satou M."/>
            <person name="Tamse R."/>
            <person name="Vaysberg M."/>
            <person name="Wallender E.K."/>
            <person name="Wong C."/>
            <person name="Yamamura Y."/>
            <person name="Yuan S."/>
            <person name="Shinozaki K."/>
            <person name="Davis R.W."/>
            <person name="Theologis A."/>
            <person name="Ecker J.R."/>
        </authorList>
    </citation>
    <scope>NUCLEOTIDE SEQUENCE [LARGE SCALE MRNA]</scope>
    <source>
        <strain>cv. Columbia</strain>
    </source>
</reference>
<reference key="4">
    <citation type="journal article" date="2002" name="Biosci. Biotechnol. Biochem.">
        <title>Compilation and characterization of a novel WNK family of protein kinases in Arabiodpsis thaliana with reference to circadian rhythms.</title>
        <authorList>
            <person name="Nakamichi N."/>
            <person name="Murakami-Kojima M."/>
            <person name="Sato E."/>
            <person name="Kishi Y."/>
            <person name="Yamashino T."/>
            <person name="Mizuno T."/>
        </authorList>
    </citation>
    <scope>NUCLEOTIDE SEQUENCE [MRNA] OF 14-563</scope>
    <source>
        <strain>cv. Columbia</strain>
    </source>
</reference>
<reference key="5">
    <citation type="journal article" date="2006" name="FEBS Lett.">
        <title>A WNK kinase binds and phosphorylates V-ATPase subunit C.</title>
        <authorList>
            <person name="Hong-Hermesdorf A."/>
            <person name="Bruex A."/>
            <person name="Grueber A."/>
            <person name="Grueber G."/>
            <person name="Schumacher K."/>
        </authorList>
    </citation>
    <scope>FUNCTION</scope>
    <scope>AUTOPHOSPHORYLATION</scope>
    <scope>MUTAGENESIS OF LYS-41 AND ASP-157</scope>
</reference>
<reference key="6">
    <citation type="journal article" date="2008" name="Plant Biol.">
        <title>The plant WNK gene family and regulation of flowering time in Arabidopsis.</title>
        <authorList>
            <person name="Wang Y."/>
            <person name="Liu K."/>
            <person name="Liao H."/>
            <person name="Zhuang C."/>
            <person name="Ma H."/>
            <person name="Yan X."/>
        </authorList>
    </citation>
    <scope>FUNCTION</scope>
    <scope>DISRUPTION PHENOTYPE</scope>
</reference>
<reference key="7">
    <citation type="journal article" date="2010" name="BMC Plant Biol.">
        <title>Co-option of EDM2 to distinct regulatory modules in Arabidopsis thaliana development.</title>
        <authorList>
            <person name="Tsuchiya T."/>
            <person name="Eulgem T."/>
        </authorList>
    </citation>
    <scope>FUNCTION</scope>
    <source>
        <strain>cv. Columbia</strain>
    </source>
</reference>
<reference key="8">
    <citation type="journal article" date="2010" name="Plant J.">
        <title>The Arabidopsis defense component EDM2 affects the floral transition in an FLC-dependent manner.</title>
        <authorList>
            <person name="Tsuchiya T."/>
            <person name="Eulgem T."/>
        </authorList>
    </citation>
    <scope>FUNCTION</scope>
    <scope>SUBCELLULAR LOCATION</scope>
    <scope>INTERACTION WITH EDM2</scope>
    <scope>AUTOPHOSPHORYLATION</scope>
    <source>
        <strain>cv. Columbia</strain>
    </source>
</reference>
<reference key="9">
    <citation type="journal article" date="2011" name="Mol. Syst. Biol.">
        <title>Arabidopsis G-protein interactome reveals connections to cell wall carbohydrates and morphogenesis.</title>
        <authorList>
            <person name="Klopffleisch K."/>
            <person name="Phan N."/>
            <person name="Augustin K."/>
            <person name="Bayne R.S."/>
            <person name="Booker K.S."/>
            <person name="Botella J.R."/>
            <person name="Carpita N.C."/>
            <person name="Carr T."/>
            <person name="Chen J.G."/>
            <person name="Cooke T.R."/>
            <person name="Frick-Cheng A."/>
            <person name="Friedman E.J."/>
            <person name="Fulk B."/>
            <person name="Hahn M.G."/>
            <person name="Jiang K."/>
            <person name="Jorda L."/>
            <person name="Kruppe L."/>
            <person name="Liu C."/>
            <person name="Lorek J."/>
            <person name="McCann M.C."/>
            <person name="Molina A."/>
            <person name="Moriyama E.N."/>
            <person name="Mukhtar M.S."/>
            <person name="Mudgil Y."/>
            <person name="Pattathil S."/>
            <person name="Schwarz J."/>
            <person name="Seta S."/>
            <person name="Tan M."/>
            <person name="Temp U."/>
            <person name="Trusov Y."/>
            <person name="Urano D."/>
            <person name="Welter B."/>
            <person name="Yang J."/>
            <person name="Panstruga R."/>
            <person name="Uhrig J.F."/>
            <person name="Jones A.M."/>
        </authorList>
    </citation>
    <scope>INTERACTION WITH RGS1</scope>
</reference>
<reference key="10">
    <citation type="journal article" date="2012" name="Nat. Cell Biol.">
        <title>Endocytosis of the seven-transmembrane RGS1 protein activates G-protein-coupled signalling in Arabidopsis.</title>
        <authorList>
            <person name="Urano D."/>
            <person name="Phan N."/>
            <person name="Jones J.C."/>
            <person name="Yang J."/>
            <person name="Huang J."/>
            <person name="Grigston J."/>
            <person name="Taylor J.P."/>
            <person name="Jones A.M."/>
        </authorList>
    </citation>
    <scope>INTERACTION WITH RGS1 AND GB1</scope>
</reference>
<organism>
    <name type="scientific">Arabidopsis thaliana</name>
    <name type="common">Mouse-ear cress</name>
    <dbReference type="NCBI Taxonomy" id="3702"/>
    <lineage>
        <taxon>Eukaryota</taxon>
        <taxon>Viridiplantae</taxon>
        <taxon>Streptophyta</taxon>
        <taxon>Embryophyta</taxon>
        <taxon>Tracheophyta</taxon>
        <taxon>Spermatophyta</taxon>
        <taxon>Magnoliopsida</taxon>
        <taxon>eudicotyledons</taxon>
        <taxon>Gunneridae</taxon>
        <taxon>Pentapetalae</taxon>
        <taxon>rosids</taxon>
        <taxon>malvids</taxon>
        <taxon>Brassicales</taxon>
        <taxon>Brassicaceae</taxon>
        <taxon>Camelineae</taxon>
        <taxon>Arabidopsis</taxon>
    </lineage>
</organism>
<proteinExistence type="evidence at protein level"/>
<protein>
    <recommendedName>
        <fullName>Serine/threonine-protein kinase WNK8</fullName>
        <shortName>AtWNK8</shortName>
        <ecNumber>2.7.11.1</ecNumber>
    </recommendedName>
    <alternativeName>
        <fullName>Protein kinase with no lysine 8</fullName>
    </alternativeName>
</protein>
<evidence type="ECO:0000250" key="1">
    <source>
        <dbReference type="UniProtKB" id="Q9H4A3"/>
    </source>
</evidence>
<evidence type="ECO:0000250" key="2">
    <source>
        <dbReference type="UniProtKB" id="Q9JIH7"/>
    </source>
</evidence>
<evidence type="ECO:0000250" key="3">
    <source>
        <dbReference type="UniProtKB" id="Q9LVL5"/>
    </source>
</evidence>
<evidence type="ECO:0000255" key="4">
    <source>
        <dbReference type="PROSITE-ProRule" id="PRU00159"/>
    </source>
</evidence>
<evidence type="ECO:0000256" key="5">
    <source>
        <dbReference type="SAM" id="MobiDB-lite"/>
    </source>
</evidence>
<evidence type="ECO:0000269" key="6">
    <source>
    </source>
</evidence>
<evidence type="ECO:0000269" key="7">
    <source>
    </source>
</evidence>
<evidence type="ECO:0000269" key="8">
    <source>
    </source>
</evidence>
<evidence type="ECO:0000269" key="9">
    <source>
    </source>
</evidence>
<evidence type="ECO:0000269" key="10">
    <source>
    </source>
</evidence>
<evidence type="ECO:0000269" key="11">
    <source>
    </source>
</evidence>
<evidence type="ECO:0000305" key="12"/>
<sequence length="563" mass="63803">MASGSGFLGQISSMEEADFAEKDPSGRYIRYDDVLGRGAFKTVYKAFDEVDGIEVAWNLVSIEDVMQMPGQLERLYSEVHLLKALKHENIIKLFYSWVDEKNKTINMITELFTSGSLRVYRKKHRKVDPKAIKNWARQILKGLNYLHSQNPPVIHRDLKCDNIFVNGNTGEVKIGDLGLATVLQQPTARSVIGTPEFMAPELYEEEYNELVDIYSFGMCMLEMVTCEYPYNECRNQAQIYKKVTSNIKPQSLGKVDDPQVRQFIEKCLLPASSRPTALELSKDPFLARDGGKDSALLASSSTSSKYVRPPQLEHLPMDVDHNENKSVSSNEDYPWSQTIELQRIAENKEFRLRGERSDDVTASMVLRIADPSGKCRIVHFAFYLESDTATAIAEEMVEELHLTSQEVVVIADMIDDFIMQLLSDRTSSHHNQNSPRLTHEDHEAANQQTVNSKDEEAAGQSMKSDISADYYFPYSANDGNAAMEAGRDAESMSSYLDSCSMMSTIYNLSISDNDYPEDLKTELNLIESQFNQSFQDLLKLKEDAIENAKRKWITKKQKAVNIS</sequence>
<gene>
    <name type="primary">WNK8</name>
    <name type="ordered locus">At5g41990</name>
    <name type="ORF">MJC20.9</name>
</gene>